<sequence length="429" mass="48598">MSLKLEVKTEIKLDYQDFQNQINEFHKRINDKNSPDIIFLGWNNFPEVAINPQEIARMRKIVENLHQNSINVLVVIGIGGSYLGAKAALDFILGLGPFENKPEVIFLGNSLSSTDLYQKIEYLKTKNFAINVISKSGSTIEPAITFQILYQFLIDQIGEKLAKTRTFVTTSIKSGELLEIAKSNELEIFEVIESIGGRFSVLSSVGFFPLLFAKINVDEIIQGAIKAHKKYSTSSISQNLAYKYALFRFLMYKNFNYKTEILISYEPFLIYFNEWWKQLFGESEGKNLKGLFPASAIFTTDLHSLGQFIQDGSKNFFQTIIYIKKPKFDLGIKKLVQFNTKINKLSGKTVSEINFQAFLATTLAHSSYGNNPNLVLEIADSSPKTFGHLVMFFEKACAMSAYLLGVNPFDQPGVESYKNELAKNLGWDR</sequence>
<keyword id="KW-0963">Cytoplasm</keyword>
<keyword id="KW-0312">Gluconeogenesis</keyword>
<keyword id="KW-0324">Glycolysis</keyword>
<keyword id="KW-0413">Isomerase</keyword>
<comment type="function">
    <text evidence="1">Catalyzes the reversible isomerization of glucose-6-phosphate to fructose-6-phosphate.</text>
</comment>
<comment type="catalytic activity">
    <reaction evidence="1">
        <text>alpha-D-glucose 6-phosphate = beta-D-fructose 6-phosphate</text>
        <dbReference type="Rhea" id="RHEA:11816"/>
        <dbReference type="ChEBI" id="CHEBI:57634"/>
        <dbReference type="ChEBI" id="CHEBI:58225"/>
        <dbReference type="EC" id="5.3.1.9"/>
    </reaction>
</comment>
<comment type="pathway">
    <text evidence="1">Carbohydrate biosynthesis; gluconeogenesis.</text>
</comment>
<comment type="pathway">
    <text evidence="1">Carbohydrate degradation; glycolysis; D-glyceraldehyde 3-phosphate and glycerone phosphate from D-glucose: step 2/4.</text>
</comment>
<comment type="subcellular location">
    <subcellularLocation>
        <location evidence="1">Cytoplasm</location>
    </subcellularLocation>
</comment>
<comment type="similarity">
    <text evidence="1">Belongs to the GPI family.</text>
</comment>
<name>G6PI_MESH2</name>
<dbReference type="EC" id="5.3.1.9" evidence="1"/>
<dbReference type="EMBL" id="AE017332">
    <property type="protein sequence ID" value="AAV27948.1"/>
    <property type="molecule type" value="Genomic_DNA"/>
</dbReference>
<dbReference type="RefSeq" id="WP_011206381.1">
    <property type="nucleotide sequence ID" value="NC_006360.1"/>
</dbReference>
<dbReference type="SMR" id="Q600A8"/>
<dbReference type="KEGG" id="mhy:mhp548"/>
<dbReference type="eggNOG" id="COG0166">
    <property type="taxonomic scope" value="Bacteria"/>
</dbReference>
<dbReference type="HOGENOM" id="CLU_037303_0_1_14"/>
<dbReference type="PhylomeDB" id="Q600A8"/>
<dbReference type="UniPathway" id="UPA00109">
    <property type="reaction ID" value="UER00181"/>
</dbReference>
<dbReference type="UniPathway" id="UPA00138"/>
<dbReference type="Proteomes" id="UP000006822">
    <property type="component" value="Chromosome"/>
</dbReference>
<dbReference type="GO" id="GO:0005829">
    <property type="term" value="C:cytosol"/>
    <property type="evidence" value="ECO:0007669"/>
    <property type="project" value="TreeGrafter"/>
</dbReference>
<dbReference type="GO" id="GO:0097367">
    <property type="term" value="F:carbohydrate derivative binding"/>
    <property type="evidence" value="ECO:0007669"/>
    <property type="project" value="InterPro"/>
</dbReference>
<dbReference type="GO" id="GO:0004347">
    <property type="term" value="F:glucose-6-phosphate isomerase activity"/>
    <property type="evidence" value="ECO:0007669"/>
    <property type="project" value="UniProtKB-UniRule"/>
</dbReference>
<dbReference type="GO" id="GO:0048029">
    <property type="term" value="F:monosaccharide binding"/>
    <property type="evidence" value="ECO:0007669"/>
    <property type="project" value="TreeGrafter"/>
</dbReference>
<dbReference type="GO" id="GO:0006094">
    <property type="term" value="P:gluconeogenesis"/>
    <property type="evidence" value="ECO:0007669"/>
    <property type="project" value="UniProtKB-UniRule"/>
</dbReference>
<dbReference type="GO" id="GO:0051156">
    <property type="term" value="P:glucose 6-phosphate metabolic process"/>
    <property type="evidence" value="ECO:0007669"/>
    <property type="project" value="TreeGrafter"/>
</dbReference>
<dbReference type="GO" id="GO:0006096">
    <property type="term" value="P:glycolytic process"/>
    <property type="evidence" value="ECO:0007669"/>
    <property type="project" value="UniProtKB-UniRule"/>
</dbReference>
<dbReference type="CDD" id="cd05015">
    <property type="entry name" value="SIS_PGI_1"/>
    <property type="match status" value="1"/>
</dbReference>
<dbReference type="CDD" id="cd05016">
    <property type="entry name" value="SIS_PGI_2"/>
    <property type="match status" value="1"/>
</dbReference>
<dbReference type="FunFam" id="3.40.50.10490:FF:000016">
    <property type="entry name" value="Glucose-6-phosphate isomerase"/>
    <property type="match status" value="1"/>
</dbReference>
<dbReference type="Gene3D" id="3.40.50.10490">
    <property type="entry name" value="Glucose-6-phosphate isomerase like protein, domain 1"/>
    <property type="match status" value="2"/>
</dbReference>
<dbReference type="HAMAP" id="MF_00473">
    <property type="entry name" value="G6P_isomerase"/>
    <property type="match status" value="1"/>
</dbReference>
<dbReference type="InterPro" id="IPR001672">
    <property type="entry name" value="G6P_Isomerase"/>
</dbReference>
<dbReference type="InterPro" id="IPR018189">
    <property type="entry name" value="Phosphoglucose_isomerase_CS"/>
</dbReference>
<dbReference type="InterPro" id="IPR046348">
    <property type="entry name" value="SIS_dom_sf"/>
</dbReference>
<dbReference type="InterPro" id="IPR035476">
    <property type="entry name" value="SIS_PGI_1"/>
</dbReference>
<dbReference type="InterPro" id="IPR035482">
    <property type="entry name" value="SIS_PGI_2"/>
</dbReference>
<dbReference type="NCBIfam" id="NF010697">
    <property type="entry name" value="PRK14097.1"/>
    <property type="match status" value="1"/>
</dbReference>
<dbReference type="PANTHER" id="PTHR11469">
    <property type="entry name" value="GLUCOSE-6-PHOSPHATE ISOMERASE"/>
    <property type="match status" value="1"/>
</dbReference>
<dbReference type="PANTHER" id="PTHR11469:SF1">
    <property type="entry name" value="GLUCOSE-6-PHOSPHATE ISOMERASE"/>
    <property type="match status" value="1"/>
</dbReference>
<dbReference type="Pfam" id="PF00342">
    <property type="entry name" value="PGI"/>
    <property type="match status" value="1"/>
</dbReference>
<dbReference type="PRINTS" id="PR00662">
    <property type="entry name" value="G6PISOMERASE"/>
</dbReference>
<dbReference type="SUPFAM" id="SSF53697">
    <property type="entry name" value="SIS domain"/>
    <property type="match status" value="1"/>
</dbReference>
<dbReference type="PROSITE" id="PS00765">
    <property type="entry name" value="P_GLUCOSE_ISOMERASE_1"/>
    <property type="match status" value="1"/>
</dbReference>
<dbReference type="PROSITE" id="PS00174">
    <property type="entry name" value="P_GLUCOSE_ISOMERASE_2"/>
    <property type="match status" value="1"/>
</dbReference>
<dbReference type="PROSITE" id="PS51463">
    <property type="entry name" value="P_GLUCOSE_ISOMERASE_3"/>
    <property type="match status" value="1"/>
</dbReference>
<evidence type="ECO:0000255" key="1">
    <source>
        <dbReference type="HAMAP-Rule" id="MF_00473"/>
    </source>
</evidence>
<organism>
    <name type="scientific">Mesomycoplasma hyopneumoniae (strain 232)</name>
    <name type="common">Mycoplasma hyopneumoniae</name>
    <dbReference type="NCBI Taxonomy" id="295358"/>
    <lineage>
        <taxon>Bacteria</taxon>
        <taxon>Bacillati</taxon>
        <taxon>Mycoplasmatota</taxon>
        <taxon>Mycoplasmoidales</taxon>
        <taxon>Metamycoplasmataceae</taxon>
        <taxon>Mesomycoplasma</taxon>
    </lineage>
</organism>
<accession>Q600A8</accession>
<gene>
    <name evidence="1" type="primary">pgi</name>
    <name type="ordered locus">mhp548</name>
</gene>
<protein>
    <recommendedName>
        <fullName evidence="1">Glucose-6-phosphate isomerase</fullName>
        <shortName evidence="1">GPI</shortName>
        <ecNumber evidence="1">5.3.1.9</ecNumber>
    </recommendedName>
    <alternativeName>
        <fullName evidence="1">Phosphoglucose isomerase</fullName>
        <shortName evidence="1">PGI</shortName>
    </alternativeName>
    <alternativeName>
        <fullName evidence="1">Phosphohexose isomerase</fullName>
        <shortName evidence="1">PHI</shortName>
    </alternativeName>
</protein>
<feature type="chain" id="PRO_0000180680" description="Glucose-6-phosphate isomerase">
    <location>
        <begin position="1"/>
        <end position="429"/>
    </location>
</feature>
<feature type="active site" description="Proton donor" evidence="1">
    <location>
        <position position="282"/>
    </location>
</feature>
<feature type="active site" evidence="1">
    <location>
        <position position="303"/>
    </location>
</feature>
<feature type="active site" evidence="1">
    <location>
        <position position="418"/>
    </location>
</feature>
<reference key="1">
    <citation type="journal article" date="2004" name="J. Bacteriol.">
        <title>The genome sequence of Mycoplasma hyopneumoniae strain 232, the agent of swine mycoplasmosis.</title>
        <authorList>
            <person name="Minion F.C."/>
            <person name="Lefkowitz E.J."/>
            <person name="Madsen M.L."/>
            <person name="Cleary B.J."/>
            <person name="Swartzell S.M."/>
            <person name="Mahairas G.G."/>
        </authorList>
    </citation>
    <scope>NUCLEOTIDE SEQUENCE [LARGE SCALE GENOMIC DNA]</scope>
    <source>
        <strain>232</strain>
    </source>
</reference>
<proteinExistence type="inferred from homology"/>